<protein>
    <recommendedName>
        <fullName>Deoxyribonuclease-1</fullName>
        <ecNumber evidence="6 12 13">3.1.21.1</ecNumber>
    </recommendedName>
    <alternativeName>
        <fullName>Deoxyribonuclease I</fullName>
        <shortName>DNase I</shortName>
    </alternativeName>
</protein>
<gene>
    <name type="primary">DNASE1</name>
    <name type="synonym">DNL1</name>
</gene>
<dbReference type="EC" id="3.1.21.1" evidence="6 12 13"/>
<dbReference type="EMBL" id="AJ001538">
    <property type="protein sequence ID" value="CAA04819.1"/>
    <property type="molecule type" value="mRNA"/>
</dbReference>
<dbReference type="EMBL" id="AF528509">
    <property type="protein sequence ID" value="AAM93248.1"/>
    <property type="molecule type" value="Genomic_DNA"/>
</dbReference>
<dbReference type="EMBL" id="BC142349">
    <property type="protein sequence ID" value="AAI42350.1"/>
    <property type="molecule type" value="mRNA"/>
</dbReference>
<dbReference type="PIR" id="JC6532">
    <property type="entry name" value="NDBOA"/>
</dbReference>
<dbReference type="RefSeq" id="NP_776959.1">
    <property type="nucleotide sequence ID" value="NM_174534.2"/>
</dbReference>
<dbReference type="RefSeq" id="XP_010817356.1">
    <property type="nucleotide sequence ID" value="XM_010819054.2"/>
</dbReference>
<dbReference type="RefSeq" id="XP_015315660.1">
    <property type="nucleotide sequence ID" value="XM_015460174.1"/>
</dbReference>
<dbReference type="RefSeq" id="XP_015315661.1">
    <property type="nucleotide sequence ID" value="XM_015460175.1"/>
</dbReference>
<dbReference type="RefSeq" id="XP_015315662.1">
    <property type="nucleotide sequence ID" value="XM_015460176.1"/>
</dbReference>
<dbReference type="RefSeq" id="XP_015315663.1">
    <property type="nucleotide sequence ID" value="XM_015460177.1"/>
</dbReference>
<dbReference type="RefSeq" id="XP_024840423.1">
    <property type="nucleotide sequence ID" value="XM_024984655.2"/>
</dbReference>
<dbReference type="RefSeq" id="XP_024840425.1">
    <property type="nucleotide sequence ID" value="XM_024984657.2"/>
</dbReference>
<dbReference type="RefSeq" id="XP_024840426.1">
    <property type="nucleotide sequence ID" value="XM_024984658.2"/>
</dbReference>
<dbReference type="RefSeq" id="XP_024840427.1">
    <property type="nucleotide sequence ID" value="XM_024984659.2"/>
</dbReference>
<dbReference type="RefSeq" id="XP_059737140.1">
    <property type="nucleotide sequence ID" value="XM_059881157.1"/>
</dbReference>
<dbReference type="RefSeq" id="XP_059737141.1">
    <property type="nucleotide sequence ID" value="XM_059881158.1"/>
</dbReference>
<dbReference type="PDB" id="1ATN">
    <property type="method" value="X-ray"/>
    <property type="resolution" value="2.80 A"/>
    <property type="chains" value="D=23-282"/>
</dbReference>
<dbReference type="PDB" id="1DNK">
    <property type="method" value="X-ray"/>
    <property type="resolution" value="2.30 A"/>
    <property type="chains" value="A=23-282"/>
</dbReference>
<dbReference type="PDB" id="2A3Z">
    <property type="method" value="X-ray"/>
    <property type="resolution" value="2.08 A"/>
    <property type="chains" value="B=23-282"/>
</dbReference>
<dbReference type="PDB" id="2A40">
    <property type="method" value="X-ray"/>
    <property type="resolution" value="1.80 A"/>
    <property type="chains" value="B/E=23-282"/>
</dbReference>
<dbReference type="PDB" id="2A41">
    <property type="method" value="X-ray"/>
    <property type="resolution" value="2.60 A"/>
    <property type="chains" value="B=23-282"/>
</dbReference>
<dbReference type="PDB" id="2A42">
    <property type="method" value="X-ray"/>
    <property type="resolution" value="1.85 A"/>
    <property type="chains" value="B=23-282"/>
</dbReference>
<dbReference type="PDB" id="2D1K">
    <property type="method" value="X-ray"/>
    <property type="resolution" value="2.50 A"/>
    <property type="chains" value="B=23-282"/>
</dbReference>
<dbReference type="PDB" id="2DNJ">
    <property type="method" value="X-ray"/>
    <property type="resolution" value="2.00 A"/>
    <property type="chains" value="A=23-282"/>
</dbReference>
<dbReference type="PDB" id="3CJC">
    <property type="method" value="X-ray"/>
    <property type="resolution" value="3.90 A"/>
    <property type="chains" value="D=23-282"/>
</dbReference>
<dbReference type="PDB" id="3DNI">
    <property type="method" value="X-ray"/>
    <property type="resolution" value="2.00 A"/>
    <property type="chains" value="A=23-282"/>
</dbReference>
<dbReference type="PDB" id="3W3D">
    <property type="method" value="X-ray"/>
    <property type="resolution" value="1.80 A"/>
    <property type="chains" value="B=23-282"/>
</dbReference>
<dbReference type="PDB" id="7NXV">
    <property type="method" value="X-ray"/>
    <property type="resolution" value="2.55 A"/>
    <property type="chains" value="B/F=23-282"/>
</dbReference>
<dbReference type="PDB" id="7NZM">
    <property type="method" value="EM"/>
    <property type="resolution" value="3.96 A"/>
    <property type="chains" value="D=23-282"/>
</dbReference>
<dbReference type="PDB" id="9FJU">
    <property type="method" value="EM"/>
    <property type="resolution" value="3.84 A"/>
    <property type="chains" value="E/F=1-282"/>
</dbReference>
<dbReference type="PDB" id="9FJY">
    <property type="method" value="EM"/>
    <property type="resolution" value="3.79 A"/>
    <property type="chains" value="E/F=1-282"/>
</dbReference>
<dbReference type="PDBsum" id="1ATN"/>
<dbReference type="PDBsum" id="1DNK"/>
<dbReference type="PDBsum" id="2A3Z"/>
<dbReference type="PDBsum" id="2A40"/>
<dbReference type="PDBsum" id="2A41"/>
<dbReference type="PDBsum" id="2A42"/>
<dbReference type="PDBsum" id="2D1K"/>
<dbReference type="PDBsum" id="2DNJ"/>
<dbReference type="PDBsum" id="3CJC"/>
<dbReference type="PDBsum" id="3DNI"/>
<dbReference type="PDBsum" id="3W3D"/>
<dbReference type="PDBsum" id="7NXV"/>
<dbReference type="PDBsum" id="7NZM"/>
<dbReference type="PDBsum" id="9FJU"/>
<dbReference type="PDBsum" id="9FJY"/>
<dbReference type="EMDB" id="EMD-12665"/>
<dbReference type="EMDB" id="EMD-50516"/>
<dbReference type="EMDB" id="EMD-50517"/>
<dbReference type="PCDDB" id="P00639"/>
<dbReference type="SMR" id="P00639"/>
<dbReference type="DIP" id="DIP-541N"/>
<dbReference type="FunCoup" id="P00639">
    <property type="interactions" value="286"/>
</dbReference>
<dbReference type="IntAct" id="P00639">
    <property type="interactions" value="2"/>
</dbReference>
<dbReference type="MINT" id="P00639"/>
<dbReference type="STRING" id="9913.ENSBTAP00000026784"/>
<dbReference type="BindingDB" id="P00639"/>
<dbReference type="ChEMBL" id="CHEMBL5712"/>
<dbReference type="GlyCosmos" id="P00639">
    <property type="glycosylation" value="1 site, No reported glycans"/>
</dbReference>
<dbReference type="GlyGen" id="P00639">
    <property type="glycosylation" value="1 site"/>
</dbReference>
<dbReference type="iPTMnet" id="P00639"/>
<dbReference type="PaxDb" id="9913-ENSBTAP00000054758"/>
<dbReference type="GeneID" id="282217"/>
<dbReference type="KEGG" id="bta:282217"/>
<dbReference type="CTD" id="1773"/>
<dbReference type="VEuPathDB" id="HostDB:ENSBTAG00000020107"/>
<dbReference type="eggNOG" id="ENOG502QQFT">
    <property type="taxonomic scope" value="Eukaryota"/>
</dbReference>
<dbReference type="HOGENOM" id="CLU_043335_2_1_1"/>
<dbReference type="InParanoid" id="P00639"/>
<dbReference type="OMA" id="YHFVVSE"/>
<dbReference type="OrthoDB" id="10061407at2759"/>
<dbReference type="BRENDA" id="3.1.21.1">
    <property type="organism ID" value="908"/>
</dbReference>
<dbReference type="EvolutionaryTrace" id="P00639"/>
<dbReference type="PRO" id="PR:P00639"/>
<dbReference type="Proteomes" id="UP000009136">
    <property type="component" value="Chromosome 25"/>
</dbReference>
<dbReference type="Bgee" id="ENSBTAG00000020107">
    <property type="expression patterns" value="Expressed in adult mammalian kidney and 102 other cell types or tissues"/>
</dbReference>
<dbReference type="GO" id="GO:0005576">
    <property type="term" value="C:extracellular region"/>
    <property type="evidence" value="ECO:0007669"/>
    <property type="project" value="UniProtKB-SubCell"/>
</dbReference>
<dbReference type="GO" id="GO:0005635">
    <property type="term" value="C:nuclear envelope"/>
    <property type="evidence" value="ECO:0007669"/>
    <property type="project" value="UniProtKB-SubCell"/>
</dbReference>
<dbReference type="GO" id="GO:0005634">
    <property type="term" value="C:nucleus"/>
    <property type="evidence" value="ECO:0000318"/>
    <property type="project" value="GO_Central"/>
</dbReference>
<dbReference type="GO" id="GO:0042588">
    <property type="term" value="C:zymogen granule"/>
    <property type="evidence" value="ECO:0007669"/>
    <property type="project" value="UniProtKB-SubCell"/>
</dbReference>
<dbReference type="GO" id="GO:0003779">
    <property type="term" value="F:actin binding"/>
    <property type="evidence" value="ECO:0007669"/>
    <property type="project" value="UniProtKB-KW"/>
</dbReference>
<dbReference type="GO" id="GO:0004530">
    <property type="term" value="F:deoxyribonuclease I activity"/>
    <property type="evidence" value="ECO:0000318"/>
    <property type="project" value="GO_Central"/>
</dbReference>
<dbReference type="GO" id="GO:0003677">
    <property type="term" value="F:DNA binding"/>
    <property type="evidence" value="ECO:0000318"/>
    <property type="project" value="GO_Central"/>
</dbReference>
<dbReference type="GO" id="GO:0006915">
    <property type="term" value="P:apoptotic process"/>
    <property type="evidence" value="ECO:0007669"/>
    <property type="project" value="UniProtKB-KW"/>
</dbReference>
<dbReference type="GO" id="GO:0006308">
    <property type="term" value="P:DNA catabolic process"/>
    <property type="evidence" value="ECO:0000250"/>
    <property type="project" value="UniProtKB"/>
</dbReference>
<dbReference type="GO" id="GO:0002283">
    <property type="term" value="P:neutrophil activation involved in immune response"/>
    <property type="evidence" value="ECO:0000250"/>
    <property type="project" value="UniProtKB"/>
</dbReference>
<dbReference type="GO" id="GO:0002673">
    <property type="term" value="P:regulation of acute inflammatory response"/>
    <property type="evidence" value="ECO:0000250"/>
    <property type="project" value="UniProtKB"/>
</dbReference>
<dbReference type="GO" id="GO:0070948">
    <property type="term" value="P:regulation of neutrophil mediated cytotoxicity"/>
    <property type="evidence" value="ECO:0000250"/>
    <property type="project" value="UniProtKB"/>
</dbReference>
<dbReference type="CDD" id="cd09075">
    <property type="entry name" value="DNase1-like"/>
    <property type="match status" value="1"/>
</dbReference>
<dbReference type="FunFam" id="3.60.10.10:FF:000035">
    <property type="entry name" value="Deoxyribonuclease"/>
    <property type="match status" value="1"/>
</dbReference>
<dbReference type="Gene3D" id="3.60.10.10">
    <property type="entry name" value="Endonuclease/exonuclease/phosphatase"/>
    <property type="match status" value="1"/>
</dbReference>
<dbReference type="InterPro" id="IPR018057">
    <property type="entry name" value="Deoxyribonuclease-1_AS"/>
</dbReference>
<dbReference type="InterPro" id="IPR016202">
    <property type="entry name" value="DNase_I"/>
</dbReference>
<dbReference type="InterPro" id="IPR033125">
    <property type="entry name" value="DNASE_I_2"/>
</dbReference>
<dbReference type="InterPro" id="IPR036691">
    <property type="entry name" value="Endo/exonu/phosph_ase_sf"/>
</dbReference>
<dbReference type="InterPro" id="IPR005135">
    <property type="entry name" value="Endo/exonuclease/phosphatase"/>
</dbReference>
<dbReference type="PANTHER" id="PTHR11371">
    <property type="entry name" value="DEOXYRIBONUCLEASE"/>
    <property type="match status" value="1"/>
</dbReference>
<dbReference type="PANTHER" id="PTHR11371:SF27">
    <property type="entry name" value="DEOXYRIBONUCLEASE-1"/>
    <property type="match status" value="1"/>
</dbReference>
<dbReference type="Pfam" id="PF03372">
    <property type="entry name" value="Exo_endo_phos"/>
    <property type="match status" value="1"/>
</dbReference>
<dbReference type="PIRSF" id="PIRSF000988">
    <property type="entry name" value="DNase_I_euk"/>
    <property type="match status" value="1"/>
</dbReference>
<dbReference type="PRINTS" id="PR00130">
    <property type="entry name" value="DNASEI"/>
</dbReference>
<dbReference type="SMART" id="SM00476">
    <property type="entry name" value="DNaseIc"/>
    <property type="match status" value="1"/>
</dbReference>
<dbReference type="SUPFAM" id="SSF56219">
    <property type="entry name" value="DNase I-like"/>
    <property type="match status" value="1"/>
</dbReference>
<dbReference type="PROSITE" id="PS00919">
    <property type="entry name" value="DNASE_I_1"/>
    <property type="match status" value="1"/>
</dbReference>
<dbReference type="PROSITE" id="PS00918">
    <property type="entry name" value="DNASE_I_2"/>
    <property type="match status" value="1"/>
</dbReference>
<accession>P00639</accession>
<accession>A5PK44</accession>
<accession>Q8MJ27</accession>
<comment type="function">
    <text evidence="1 3 5 6 12 13">Serum endocuclease secreted into body fluids by a wide variety of exocrine and endocrine organs (PubMed:2395459, PubMed:3352748, PubMed:4976790, PubMed:5166750). Expressed by non-hematopoietic tissues and preferentially cleaves protein-free DNA (By similarity). Among other functions, seems to be involved in cell death by apoptosis (PubMed:2395459). Binds specifically to G-actin and blocks actin polymerization (PubMed:2395459). Together with DNASE1L3, plays a key role in degrading neutrophil extracellular traps (NETs) (By similarity). NETs are mainly composed of DNA fibers and are released by neutrophils to bind pathogens during inflammation (By similarity). Degradation of intravascular NETs by DNASE1 and DNASE1L3 is required to prevent formation of clots that obstruct blood vessels and cause organ damage following inflammation (By similarity).</text>
</comment>
<comment type="catalytic activity">
    <reaction evidence="6 12 13">
        <text>Endonucleolytic cleavage to 5'-phosphodinucleotide and 5'-phosphooligonucleotide end-products.</text>
        <dbReference type="EC" id="3.1.21.1"/>
    </reaction>
</comment>
<comment type="cofactor">
    <cofactor evidence="6 12 13">
        <name>Ca(2+)</name>
        <dbReference type="ChEBI" id="CHEBI:29108"/>
    </cofactor>
    <cofactor evidence="6 12 13">
        <name>Mg(2+)</name>
        <dbReference type="ChEBI" id="CHEBI:18420"/>
    </cofactor>
    <text evidence="6 12 13">Divalent metal cations. Prefers Ca(2+) or Mg(2+).</text>
</comment>
<comment type="interaction">
    <interactant intactId="EBI-8545986">
        <id>P00639</id>
    </interactant>
    <interactant intactId="EBI-367540">
        <id>P68135</id>
        <label>ACTA1</label>
    </interactant>
    <organismsDiffer>true</organismsDiffer>
    <experiments>3</experiments>
</comment>
<comment type="subcellular location">
    <subcellularLocation>
        <location evidence="9">Secreted</location>
    </subcellularLocation>
    <subcellularLocation>
        <location evidence="14">Zymogen granule</location>
    </subcellularLocation>
    <subcellularLocation>
        <location evidence="2">Nucleus envelope</location>
    </subcellularLocation>
    <text evidence="2">Secretory protein, stored in zymogen granules and found in the nuclear envelope.</text>
</comment>
<comment type="PTM">
    <text evidence="4">The only differences between the A and B forms and the C and D forms are in the compositions of the carbohydrate bound to Asn-40.</text>
</comment>
<comment type="similarity">
    <text evidence="14">Belongs to the DNase I family.</text>
</comment>
<reference key="1">
    <citation type="journal article" date="1998" name="Gene">
        <title>Cloning, sequencing and expression of a cDNA encoding bovine pancreatic deoxyribonuclease I in Escherichia coli: purification and characterization of the recombinant enzyme.</title>
        <authorList>
            <person name="Chen C.Y."/>
            <person name="Lu S.C."/>
            <person name="Liao T.H."/>
        </authorList>
    </citation>
    <scope>NUCLEOTIDE SEQUENCE [MRNA]</scope>
    <source>
        <tissue>Pancreas</tissue>
    </source>
</reference>
<reference key="2">
    <citation type="journal article" date="2003" name="Biochem. Biophys. Res. Commun.">
        <title>Bovine DNase I: gene organization, mRNA expression, and changes in the topological distribution of the protein during apoptosis in lens epithelial cells.</title>
        <authorList>
            <person name="De Maria A."/>
            <person name="Arruti C."/>
        </authorList>
    </citation>
    <scope>NUCLEOTIDE SEQUENCE [GENOMIC DNA]</scope>
</reference>
<reference key="3">
    <citation type="submission" date="2007-06" db="EMBL/GenBank/DDBJ databases">
        <authorList>
            <consortium name="NIH - Mammalian Gene Collection (MGC) project"/>
        </authorList>
    </citation>
    <scope>NUCLEOTIDE SEQUENCE [LARGE SCALE MRNA]</scope>
    <source>
        <strain>Hereford</strain>
        <tissue>Fetal pancreas</tissue>
    </source>
</reference>
<reference key="4">
    <citation type="journal article" date="1973" name="J. Biol. Chem.">
        <title>Bovine pancreatic deoxyribonuclease A. Isolation of cyanogen bromide peptides; complete covalent structure of the polypeptide chain.</title>
        <authorList>
            <person name="Liao T.-H."/>
            <person name="Salnikow J."/>
            <person name="Moore S."/>
            <person name="Stein W.H."/>
        </authorList>
    </citation>
    <scope>PROTEIN SEQUENCE OF 23-260</scope>
</reference>
<reference key="5">
    <citation type="journal article" date="1992" name="J. Biol. Chem.">
        <authorList>
            <person name="Liao T.-H."/>
            <person name="Salnikow J."/>
            <person name="Moore S."/>
            <person name="Stein W.H."/>
        </authorList>
    </citation>
    <scope>ERRATUM OF PUBMED:4734471</scope>
    <scope>SEQUENCE REVISION</scope>
</reference>
<reference key="6">
    <citation type="journal article" date="1973" name="J. Biol. Chem.">
        <title>Bovine pancreatic deoxyribonucleases A and C. A proline for histidine substitution in deoxyribonuclease C.</title>
        <authorList>
            <person name="Salnikow J."/>
            <person name="Murphy D."/>
        </authorList>
    </citation>
    <scope>VARIANT ALLELE C/D PRO-143</scope>
</reference>
<reference key="7">
    <citation type="journal article" date="1974" name="J. Biol. Chem.">
        <title>Bovine pancreatic deoxyribonuclease D.</title>
        <authorList>
            <person name="Liao T.-H."/>
        </authorList>
    </citation>
    <scope>VARIANT ALLELE C/D PRO-143</scope>
</reference>
<reference key="8">
    <citation type="journal article" date="1969" name="J. Biol. Chem.">
        <title>Alkylation of a histidine residue at the active site of bovine pancreatic deoxyribonuclease.</title>
        <authorList>
            <person name="Price P.A."/>
            <person name="Moore S."/>
            <person name="Stein W.H."/>
        </authorList>
    </citation>
    <scope>ACTIVE SITE HIS-156</scope>
    <scope>FUNCTION</scope>
    <scope>CATALYTIC ACTIVITY</scope>
    <scope>COFACTOR</scope>
</reference>
<reference key="9">
    <citation type="journal article" date="1971" name="J. Biol. Chem.">
        <title>Involvement of a tyrosine residue in the activity of bovine pancreatic deoxyribonuclease A.</title>
        <authorList>
            <person name="Hugli T.E."/>
            <person name="Stein W.H."/>
        </authorList>
    </citation>
    <scope>ACTIVE SITE TYR-87</scope>
    <scope>FUNCTION</scope>
    <scope>CATALYTIC ACTIVITY</scope>
    <scope>COFACTOR</scope>
</reference>
<reference key="10">
    <citation type="journal article" date="1986" name="Nature">
        <title>Structure of DNase I at 2.0-A resolution suggests a mechanism for binding to and cutting DNA.</title>
        <authorList>
            <person name="Suck D."/>
            <person name="Oefner C."/>
        </authorList>
    </citation>
    <scope>X-RAY CRYSTALLOGRAPHY (2 ANGSTROMS)</scope>
    <scope>DISULFIDE BONDS</scope>
</reference>
<reference key="11">
    <citation type="journal article" date="1986" name="J. Mol. Biol.">
        <title>Crystallographic refinement and structure of DNase I at 2-A resolution.</title>
        <authorList>
            <person name="Oefner C."/>
            <person name="Suck D."/>
        </authorList>
    </citation>
    <scope>X-RAY CRYSTALLOGRAPHY (2 ANGSTROMS)</scope>
    <scope>GLYCOSYLATION AT ASN-40</scope>
</reference>
<reference key="12">
    <citation type="journal article" date="1988" name="Nature">
        <title>Structure refined to 2 A of a nicked DNA octanucleotide complex with DNase I.</title>
        <authorList>
            <person name="Suck D."/>
            <person name="Lahm A."/>
            <person name="Oefner C."/>
        </authorList>
    </citation>
    <scope>X-RAY CRYSTALLOGRAPHY (2 ANGSTROMS) WITH NICKED DNA OCTANUCLEOTIDE</scope>
    <scope>COFACTOR</scope>
    <scope>FUNCTION</scope>
    <scope>CATALYTIC ACTIVITY</scope>
</reference>
<reference key="13">
    <citation type="journal article" date="1991" name="J. Mol. Biol.">
        <title>DNase I-induced DNA conformation. 2-A structure of a DNase I-octamer complex.</title>
        <authorList>
            <person name="Lahm A."/>
            <person name="Suck D."/>
        </authorList>
    </citation>
    <scope>X-RAY CRYSTALLOGRAPHY (2 ANGSTROMS)</scope>
    <scope>GLYCOSYLATION AT ASN-40</scope>
</reference>
<reference key="14">
    <citation type="journal article" date="1992" name="J. Mol. Biol.">
        <title>X-ray structure of the DNase I-d(GGTATACC)2 complex at 2.3-A resolution.</title>
        <authorList>
            <person name="Weston S.A."/>
            <person name="Lahm A."/>
            <person name="Suck D."/>
        </authorList>
    </citation>
    <scope>X-RAY CRYSTALLOGRAPHY (2.3 ANGSTROMS)</scope>
</reference>
<reference key="15">
    <citation type="journal article" date="1990" name="Nature">
        <title>Atomic structure of the actin:DNase I complex.</title>
        <authorList>
            <person name="Kabsch W."/>
            <person name="Mannherz H.G."/>
            <person name="Suck D."/>
            <person name="Pai E.F."/>
            <person name="Holmes K.C."/>
        </authorList>
    </citation>
    <scope>X-RAY CRYSTALLOGRAPHY (2.8 ANGSTROMS) OF COMPLEX WITH ACTIN</scope>
    <scope>ACTIVE SITE</scope>
</reference>
<proteinExistence type="evidence at protein level"/>
<keyword id="KW-0002">3D-structure</keyword>
<keyword id="KW-0009">Actin-binding</keyword>
<keyword id="KW-0053">Apoptosis</keyword>
<keyword id="KW-0106">Calcium</keyword>
<keyword id="KW-0968">Cytoplasmic vesicle</keyword>
<keyword id="KW-0903">Direct protein sequencing</keyword>
<keyword id="KW-1015">Disulfide bond</keyword>
<keyword id="KW-0255">Endonuclease</keyword>
<keyword id="KW-0325">Glycoprotein</keyword>
<keyword id="KW-0378">Hydrolase</keyword>
<keyword id="KW-0540">Nuclease</keyword>
<keyword id="KW-0539">Nucleus</keyword>
<keyword id="KW-1185">Reference proteome</keyword>
<keyword id="KW-0964">Secreted</keyword>
<keyword id="KW-0732">Signal</keyword>
<name>DNAS1_BOVIN</name>
<sequence>MRGTRLMGLLLALAGLLQLGLSLKIAAFNIRTFGETKMSNATLASYIVRIVRRYDIVLIQEVRDSHLVAVGKLLDYLNQDDPNTYHYVVSEPLGRNSYKERYLFLFRPNKVSVLDTYQYDDGCESCGNDSFSREPAVVKFSSHSTKVKEFAIVALHSAPSDAVAEINSLYDVYLDVQQKWHLNDVMLMGDFNADCSYVTSSQWSSIRLRTSSTFQWLIPDSADTTATSTNCAYDRIVVAGSLLQSSVVPGSAAPFDFQAAYGLSNEMALAISDHYPVEVTLT</sequence>
<organism>
    <name type="scientific">Bos taurus</name>
    <name type="common">Bovine</name>
    <dbReference type="NCBI Taxonomy" id="9913"/>
    <lineage>
        <taxon>Eukaryota</taxon>
        <taxon>Metazoa</taxon>
        <taxon>Chordata</taxon>
        <taxon>Craniata</taxon>
        <taxon>Vertebrata</taxon>
        <taxon>Euteleostomi</taxon>
        <taxon>Mammalia</taxon>
        <taxon>Eutheria</taxon>
        <taxon>Laurasiatheria</taxon>
        <taxon>Artiodactyla</taxon>
        <taxon>Ruminantia</taxon>
        <taxon>Pecora</taxon>
        <taxon>Bovidae</taxon>
        <taxon>Bovinae</taxon>
        <taxon>Bos</taxon>
    </lineage>
</organism>
<evidence type="ECO:0000250" key="1">
    <source>
        <dbReference type="UniProtKB" id="P21704"/>
    </source>
</evidence>
<evidence type="ECO:0000250" key="2">
    <source>
        <dbReference type="UniProtKB" id="P24855"/>
    </source>
</evidence>
<evidence type="ECO:0000250" key="3">
    <source>
        <dbReference type="UniProtKB" id="P49183"/>
    </source>
</evidence>
<evidence type="ECO:0000269" key="4">
    <source>
    </source>
</evidence>
<evidence type="ECO:0000269" key="5">
    <source>
    </source>
</evidence>
<evidence type="ECO:0000269" key="6">
    <source>
    </source>
</evidence>
<evidence type="ECO:0000269" key="7">
    <source>
    </source>
</evidence>
<evidence type="ECO:0000269" key="8">
    <source>
    </source>
</evidence>
<evidence type="ECO:0000269" key="9">
    <source>
    </source>
</evidence>
<evidence type="ECO:0000269" key="10">
    <source>
    </source>
</evidence>
<evidence type="ECO:0000269" key="11">
    <source>
    </source>
</evidence>
<evidence type="ECO:0000269" key="12">
    <source>
    </source>
</evidence>
<evidence type="ECO:0000269" key="13">
    <source>
    </source>
</evidence>
<evidence type="ECO:0000305" key="14"/>
<evidence type="ECO:0007829" key="15">
    <source>
        <dbReference type="PDB" id="1ATN"/>
    </source>
</evidence>
<evidence type="ECO:0007829" key="16">
    <source>
        <dbReference type="PDB" id="2A40"/>
    </source>
</evidence>
<evidence type="ECO:0007829" key="17">
    <source>
        <dbReference type="PDB" id="2A41"/>
    </source>
</evidence>
<feature type="signal peptide" evidence="9">
    <location>
        <begin position="1"/>
        <end position="22"/>
    </location>
</feature>
<feature type="chain" id="PRO_0000007275" description="Deoxyribonuclease-1">
    <location>
        <begin position="23"/>
        <end position="282"/>
    </location>
</feature>
<feature type="active site" evidence="5">
    <location>
        <position position="100"/>
    </location>
</feature>
<feature type="active site" evidence="5 12">
    <location>
        <position position="156"/>
    </location>
</feature>
<feature type="site" description="Involved in actin-binding" evidence="5">
    <location>
        <position position="35"/>
    </location>
</feature>
<feature type="site" description="Nitration by tetranitromethane destroys a Ca(2+) binding site and inactivates enzyme">
    <location>
        <position position="87"/>
    </location>
</feature>
<feature type="site" description="Involved in actin-binding" evidence="5">
    <location>
        <position position="89"/>
    </location>
</feature>
<feature type="glycosylation site" description="N-linked (GlcNAc...) asparagine" evidence="4 7">
    <location>
        <position position="40"/>
    </location>
</feature>
<feature type="disulfide bond" evidence="8">
    <location>
        <begin position="123"/>
        <end position="126"/>
    </location>
</feature>
<feature type="disulfide bond" description="Essential for enzymatic activity" evidence="8">
    <location>
        <begin position="195"/>
        <end position="231"/>
    </location>
</feature>
<feature type="sequence variant" description="In allele C/D." evidence="10 11">
    <original>H</original>
    <variation>P</variation>
    <location>
        <position position="143"/>
    </location>
</feature>
<feature type="sequence conflict" description="In Ref. 2; AAM93248." evidence="14" ref="2">
    <original>L</original>
    <variation>V</variation>
    <location>
        <position position="217"/>
    </location>
</feature>
<feature type="strand" evidence="16">
    <location>
        <begin position="24"/>
        <end position="34"/>
    </location>
</feature>
<feature type="helix" evidence="16">
    <location>
        <begin position="35"/>
        <end position="39"/>
    </location>
</feature>
<feature type="helix" evidence="16">
    <location>
        <begin position="41"/>
        <end position="51"/>
    </location>
</feature>
<feature type="strand" evidence="16">
    <location>
        <begin position="55"/>
        <end position="62"/>
    </location>
</feature>
<feature type="strand" evidence="15">
    <location>
        <begin position="65"/>
        <end position="67"/>
    </location>
</feature>
<feature type="helix" evidence="16">
    <location>
        <begin position="68"/>
        <end position="77"/>
    </location>
</feature>
<feature type="strand" evidence="16">
    <location>
        <begin position="79"/>
        <end position="81"/>
    </location>
</feature>
<feature type="strand" evidence="16">
    <location>
        <begin position="86"/>
        <end position="89"/>
    </location>
</feature>
<feature type="strand" evidence="16">
    <location>
        <begin position="95"/>
        <end position="97"/>
    </location>
</feature>
<feature type="strand" evidence="16">
    <location>
        <begin position="100"/>
        <end position="106"/>
    </location>
</feature>
<feature type="turn" evidence="16">
    <location>
        <begin position="108"/>
        <end position="110"/>
    </location>
</feature>
<feature type="strand" evidence="16">
    <location>
        <begin position="112"/>
        <end position="118"/>
    </location>
</feature>
<feature type="strand" evidence="17">
    <location>
        <begin position="121"/>
        <end position="123"/>
    </location>
</feature>
<feature type="turn" evidence="16">
    <location>
        <begin position="124"/>
        <end position="126"/>
    </location>
</feature>
<feature type="helix" evidence="16">
    <location>
        <begin position="127"/>
        <end position="130"/>
    </location>
</feature>
<feature type="strand" evidence="16">
    <location>
        <begin position="136"/>
        <end position="141"/>
    </location>
</feature>
<feature type="strand" evidence="16">
    <location>
        <begin position="145"/>
        <end position="154"/>
    </location>
</feature>
<feature type="helix" evidence="16">
    <location>
        <begin position="159"/>
        <end position="161"/>
    </location>
</feature>
<feature type="helix" evidence="16">
    <location>
        <begin position="162"/>
        <end position="180"/>
    </location>
</feature>
<feature type="strand" evidence="16">
    <location>
        <begin position="185"/>
        <end position="190"/>
    </location>
</feature>
<feature type="turn" evidence="16">
    <location>
        <begin position="195"/>
        <end position="197"/>
    </location>
</feature>
<feature type="helix" evidence="16">
    <location>
        <begin position="200"/>
        <end position="205"/>
    </location>
</feature>
<feature type="helix" evidence="16">
    <location>
        <begin position="207"/>
        <end position="210"/>
    </location>
</feature>
<feature type="strand" evidence="16">
    <location>
        <begin position="214"/>
        <end position="218"/>
    </location>
</feature>
<feature type="strand" evidence="16">
    <location>
        <begin position="225"/>
        <end position="228"/>
    </location>
</feature>
<feature type="strand" evidence="16">
    <location>
        <begin position="234"/>
        <end position="240"/>
    </location>
</feature>
<feature type="helix" evidence="16">
    <location>
        <begin position="241"/>
        <end position="246"/>
    </location>
</feature>
<feature type="helix" evidence="16">
    <location>
        <begin position="257"/>
        <end position="260"/>
    </location>
</feature>
<feature type="helix" evidence="16">
    <location>
        <begin position="265"/>
        <end position="271"/>
    </location>
</feature>
<feature type="strand" evidence="16">
    <location>
        <begin position="277"/>
        <end position="281"/>
    </location>
</feature>